<gene>
    <name evidence="1" type="primary">tal</name>
    <name type="ordered locus">Tpet_0617</name>
</gene>
<protein>
    <recommendedName>
        <fullName evidence="1">Probable transaldolase</fullName>
        <ecNumber evidence="1">2.2.1.2</ecNumber>
    </recommendedName>
</protein>
<proteinExistence type="inferred from homology"/>
<reference key="1">
    <citation type="submission" date="2007-05" db="EMBL/GenBank/DDBJ databases">
        <title>Complete sequence of Thermotoga petrophila RKU-1.</title>
        <authorList>
            <consortium name="US DOE Joint Genome Institute"/>
            <person name="Copeland A."/>
            <person name="Lucas S."/>
            <person name="Lapidus A."/>
            <person name="Barry K."/>
            <person name="Glavina del Rio T."/>
            <person name="Dalin E."/>
            <person name="Tice H."/>
            <person name="Pitluck S."/>
            <person name="Sims D."/>
            <person name="Brettin T."/>
            <person name="Bruce D."/>
            <person name="Detter J.C."/>
            <person name="Han C."/>
            <person name="Tapia R."/>
            <person name="Schmutz J."/>
            <person name="Larimer F."/>
            <person name="Land M."/>
            <person name="Hauser L."/>
            <person name="Kyrpides N."/>
            <person name="Mikhailova N."/>
            <person name="Nelson K."/>
            <person name="Gogarten J.P."/>
            <person name="Noll K."/>
            <person name="Richardson P."/>
        </authorList>
    </citation>
    <scope>NUCLEOTIDE SEQUENCE [LARGE SCALE GENOMIC DNA]</scope>
    <source>
        <strain>ATCC BAA-488 / DSM 13995 / JCM 10881 / RKU-1</strain>
    </source>
</reference>
<keyword id="KW-0963">Cytoplasm</keyword>
<keyword id="KW-0570">Pentose shunt</keyword>
<keyword id="KW-0704">Schiff base</keyword>
<keyword id="KW-0808">Transferase</keyword>
<organism>
    <name type="scientific">Thermotoga petrophila (strain ATCC BAA-488 / DSM 13995 / JCM 10881 / RKU-1)</name>
    <dbReference type="NCBI Taxonomy" id="390874"/>
    <lineage>
        <taxon>Bacteria</taxon>
        <taxon>Thermotogati</taxon>
        <taxon>Thermotogota</taxon>
        <taxon>Thermotogae</taxon>
        <taxon>Thermotogales</taxon>
        <taxon>Thermotogaceae</taxon>
        <taxon>Thermotoga</taxon>
    </lineage>
</organism>
<evidence type="ECO:0000255" key="1">
    <source>
        <dbReference type="HAMAP-Rule" id="MF_00494"/>
    </source>
</evidence>
<sequence>MKIFLDTANLEEIKKGVEWGIVDGVTTNPTLISKEGAEFKQRVKEICDLVKGPVSAEVVSLDYEGMVREARELAQLSEYVVIKIPMTPDGIRAVKTLSAEGIKTNVTLVFSPAQAILAAKAGATYVSPFIGRMDDLSNDGMRMLGEIVEIYDNYGFETEIIAASIRHPMHVVEAALMGVDIVTMPFAVLEKLFKHPMTDLGIERFMNDWKKYLENLKK</sequence>
<comment type="function">
    <text evidence="1">Transaldolase is important for the balance of metabolites in the pentose-phosphate pathway.</text>
</comment>
<comment type="catalytic activity">
    <reaction evidence="1">
        <text>D-sedoheptulose 7-phosphate + D-glyceraldehyde 3-phosphate = D-erythrose 4-phosphate + beta-D-fructose 6-phosphate</text>
        <dbReference type="Rhea" id="RHEA:17053"/>
        <dbReference type="ChEBI" id="CHEBI:16897"/>
        <dbReference type="ChEBI" id="CHEBI:57483"/>
        <dbReference type="ChEBI" id="CHEBI:57634"/>
        <dbReference type="ChEBI" id="CHEBI:59776"/>
        <dbReference type="EC" id="2.2.1.2"/>
    </reaction>
</comment>
<comment type="pathway">
    <text evidence="1">Carbohydrate degradation; pentose phosphate pathway; D-glyceraldehyde 3-phosphate and beta-D-fructose 6-phosphate from D-ribose 5-phosphate and D-xylulose 5-phosphate (non-oxidative stage): step 2/3.</text>
</comment>
<comment type="subcellular location">
    <subcellularLocation>
        <location evidence="1">Cytoplasm</location>
    </subcellularLocation>
</comment>
<comment type="similarity">
    <text evidence="1">Belongs to the transaldolase family. Type 3B subfamily.</text>
</comment>
<feature type="chain" id="PRO_1000060484" description="Probable transaldolase">
    <location>
        <begin position="1"/>
        <end position="218"/>
    </location>
</feature>
<feature type="active site" description="Schiff-base intermediate with substrate" evidence="1">
    <location>
        <position position="83"/>
    </location>
</feature>
<name>TAL_THEP1</name>
<accession>A5IKB4</accession>
<dbReference type="EC" id="2.2.1.2" evidence="1"/>
<dbReference type="EMBL" id="CP000702">
    <property type="protein sequence ID" value="ABQ46637.1"/>
    <property type="molecule type" value="Genomic_DNA"/>
</dbReference>
<dbReference type="RefSeq" id="WP_011943228.1">
    <property type="nucleotide sequence ID" value="NC_009486.1"/>
</dbReference>
<dbReference type="SMR" id="A5IKB4"/>
<dbReference type="STRING" id="390874.Tpet_0617"/>
<dbReference type="KEGG" id="tpt:Tpet_0617"/>
<dbReference type="eggNOG" id="COG0176">
    <property type="taxonomic scope" value="Bacteria"/>
</dbReference>
<dbReference type="HOGENOM" id="CLU_079764_0_0_0"/>
<dbReference type="UniPathway" id="UPA00115">
    <property type="reaction ID" value="UER00414"/>
</dbReference>
<dbReference type="Proteomes" id="UP000006558">
    <property type="component" value="Chromosome"/>
</dbReference>
<dbReference type="GO" id="GO:0005737">
    <property type="term" value="C:cytoplasm"/>
    <property type="evidence" value="ECO:0007669"/>
    <property type="project" value="UniProtKB-SubCell"/>
</dbReference>
<dbReference type="GO" id="GO:0016832">
    <property type="term" value="F:aldehyde-lyase activity"/>
    <property type="evidence" value="ECO:0007669"/>
    <property type="project" value="InterPro"/>
</dbReference>
<dbReference type="GO" id="GO:0004801">
    <property type="term" value="F:transaldolase activity"/>
    <property type="evidence" value="ECO:0007669"/>
    <property type="project" value="UniProtKB-UniRule"/>
</dbReference>
<dbReference type="GO" id="GO:0005975">
    <property type="term" value="P:carbohydrate metabolic process"/>
    <property type="evidence" value="ECO:0007669"/>
    <property type="project" value="InterPro"/>
</dbReference>
<dbReference type="GO" id="GO:0006098">
    <property type="term" value="P:pentose-phosphate shunt"/>
    <property type="evidence" value="ECO:0007669"/>
    <property type="project" value="UniProtKB-UniRule"/>
</dbReference>
<dbReference type="CDD" id="cd00956">
    <property type="entry name" value="Transaldolase_FSA"/>
    <property type="match status" value="1"/>
</dbReference>
<dbReference type="FunFam" id="3.20.20.70:FF:000018">
    <property type="entry name" value="Probable transaldolase"/>
    <property type="match status" value="1"/>
</dbReference>
<dbReference type="Gene3D" id="3.20.20.70">
    <property type="entry name" value="Aldolase class I"/>
    <property type="match status" value="1"/>
</dbReference>
<dbReference type="HAMAP" id="MF_00494">
    <property type="entry name" value="Transaldolase_3b"/>
    <property type="match status" value="1"/>
</dbReference>
<dbReference type="InterPro" id="IPR013785">
    <property type="entry name" value="Aldolase_TIM"/>
</dbReference>
<dbReference type="InterPro" id="IPR001585">
    <property type="entry name" value="TAL/FSA"/>
</dbReference>
<dbReference type="InterPro" id="IPR022999">
    <property type="entry name" value="Transaldolase_3B"/>
</dbReference>
<dbReference type="InterPro" id="IPR004731">
    <property type="entry name" value="Transaldolase_3B/F6P_aldolase"/>
</dbReference>
<dbReference type="InterPro" id="IPR018225">
    <property type="entry name" value="Transaldolase_AS"/>
</dbReference>
<dbReference type="InterPro" id="IPR033919">
    <property type="entry name" value="TSA/FSA_arc/bac"/>
</dbReference>
<dbReference type="NCBIfam" id="TIGR00875">
    <property type="entry name" value="fsa_talC_mipB"/>
    <property type="match status" value="1"/>
</dbReference>
<dbReference type="PANTHER" id="PTHR10683:SF40">
    <property type="entry name" value="FRUCTOSE-6-PHOSPHATE ALDOLASE 1-RELATED"/>
    <property type="match status" value="1"/>
</dbReference>
<dbReference type="PANTHER" id="PTHR10683">
    <property type="entry name" value="TRANSALDOLASE"/>
    <property type="match status" value="1"/>
</dbReference>
<dbReference type="Pfam" id="PF00923">
    <property type="entry name" value="TAL_FSA"/>
    <property type="match status" value="1"/>
</dbReference>
<dbReference type="SUPFAM" id="SSF51569">
    <property type="entry name" value="Aldolase"/>
    <property type="match status" value="1"/>
</dbReference>
<dbReference type="PROSITE" id="PS01054">
    <property type="entry name" value="TRANSALDOLASE_1"/>
    <property type="match status" value="1"/>
</dbReference>
<dbReference type="PROSITE" id="PS00958">
    <property type="entry name" value="TRANSALDOLASE_2"/>
    <property type="match status" value="1"/>
</dbReference>